<dbReference type="EC" id="4.2.1.-" evidence="1"/>
<dbReference type="EMBL" id="CP000489">
    <property type="protein sequence ID" value="ABL68435.1"/>
    <property type="molecule type" value="Genomic_DNA"/>
</dbReference>
<dbReference type="RefSeq" id="WP_011746668.1">
    <property type="nucleotide sequence ID" value="NC_008686.1"/>
</dbReference>
<dbReference type="SMR" id="A1AYU1"/>
<dbReference type="STRING" id="318586.Pden_0321"/>
<dbReference type="EnsemblBacteria" id="ABL68435">
    <property type="protein sequence ID" value="ABL68435"/>
    <property type="gene ID" value="Pden_0321"/>
</dbReference>
<dbReference type="GeneID" id="93451541"/>
<dbReference type="KEGG" id="pde:Pden_0321"/>
<dbReference type="eggNOG" id="COG4336">
    <property type="taxonomic scope" value="Bacteria"/>
</dbReference>
<dbReference type="HOGENOM" id="CLU_059759_0_0_5"/>
<dbReference type="OrthoDB" id="149585at2"/>
<dbReference type="Proteomes" id="UP000000361">
    <property type="component" value="Chromosome 1"/>
</dbReference>
<dbReference type="GO" id="GO:0016829">
    <property type="term" value="F:lyase activity"/>
    <property type="evidence" value="ECO:0007669"/>
    <property type="project" value="UniProtKB-KW"/>
</dbReference>
<dbReference type="FunFam" id="3.30.2040.10:FF:000001">
    <property type="entry name" value="D-glutamate cyclase, mitochondrial"/>
    <property type="match status" value="1"/>
</dbReference>
<dbReference type="Gene3D" id="3.40.1640.10">
    <property type="entry name" value="PSTPO5379-like"/>
    <property type="match status" value="1"/>
</dbReference>
<dbReference type="Gene3D" id="3.30.2040.10">
    <property type="entry name" value="PSTPO5379-like domain"/>
    <property type="match status" value="1"/>
</dbReference>
<dbReference type="HAMAP" id="MF_01830">
    <property type="entry name" value="Hydro_lyase"/>
    <property type="match status" value="1"/>
</dbReference>
<dbReference type="InterPro" id="IPR009906">
    <property type="entry name" value="D-Glu_cyclase"/>
</dbReference>
<dbReference type="InterPro" id="IPR038021">
    <property type="entry name" value="Putative_hydro-lyase"/>
</dbReference>
<dbReference type="InterPro" id="IPR016938">
    <property type="entry name" value="UPF0317"/>
</dbReference>
<dbReference type="NCBIfam" id="NF003969">
    <property type="entry name" value="PRK05463.1"/>
    <property type="match status" value="1"/>
</dbReference>
<dbReference type="PANTHER" id="PTHR32022">
    <property type="entry name" value="D-GLUTAMATE CYCLASE, MITOCHONDRIAL"/>
    <property type="match status" value="1"/>
</dbReference>
<dbReference type="PANTHER" id="PTHR32022:SF10">
    <property type="entry name" value="D-GLUTAMATE CYCLASE, MITOCHONDRIAL"/>
    <property type="match status" value="1"/>
</dbReference>
<dbReference type="Pfam" id="PF07286">
    <property type="entry name" value="D-Glu_cyclase"/>
    <property type="match status" value="1"/>
</dbReference>
<dbReference type="PIRSF" id="PIRSF029755">
    <property type="entry name" value="UCP029755"/>
    <property type="match status" value="1"/>
</dbReference>
<dbReference type="SUPFAM" id="SSF160920">
    <property type="entry name" value="PSTPO5379-like"/>
    <property type="match status" value="1"/>
</dbReference>
<sequence length="263" mass="28451">MTLLPDPAEARAARLACRQGAPRPTAGMAPGFTQCNMISLPKDWAWDFLLYAQRNPKPCPVLDVTDPGSHRTALAPKADLRTDIPLYRIWRDGVLAEETPDATAAWAEHPDLVTFLIGCSFTFETPLQQAGIEVRHIAQGCNVPMFLTDRDCRPAGRLHGKMVVSMRPIPAGRVAEAAMISGRTPAVHGAPVHIGAPEALGIADLSRPDFGDPVQIRPGEVPVFWACGVTPQAALMASKPPFAITHAPGYMFITDVPDTHWQV</sequence>
<protein>
    <recommendedName>
        <fullName evidence="1">Putative hydro-lyase Pden_0321</fullName>
        <ecNumber evidence="1">4.2.1.-</ecNumber>
    </recommendedName>
</protein>
<accession>A1AYU1</accession>
<keyword id="KW-0456">Lyase</keyword>
<keyword id="KW-1185">Reference proteome</keyword>
<feature type="chain" id="PRO_0000379850" description="Putative hydro-lyase Pden_0321">
    <location>
        <begin position="1"/>
        <end position="263"/>
    </location>
</feature>
<gene>
    <name type="ordered locus">Pden_0321</name>
</gene>
<organism>
    <name type="scientific">Paracoccus denitrificans (strain Pd 1222)</name>
    <dbReference type="NCBI Taxonomy" id="318586"/>
    <lineage>
        <taxon>Bacteria</taxon>
        <taxon>Pseudomonadati</taxon>
        <taxon>Pseudomonadota</taxon>
        <taxon>Alphaproteobacteria</taxon>
        <taxon>Rhodobacterales</taxon>
        <taxon>Paracoccaceae</taxon>
        <taxon>Paracoccus</taxon>
    </lineage>
</organism>
<comment type="similarity">
    <text evidence="1">Belongs to the D-glutamate cyclase family.</text>
</comment>
<name>Y321_PARDP</name>
<proteinExistence type="inferred from homology"/>
<reference key="1">
    <citation type="submission" date="2006-12" db="EMBL/GenBank/DDBJ databases">
        <title>Complete sequence of chromosome 1 of Paracoccus denitrificans PD1222.</title>
        <authorList>
            <person name="Copeland A."/>
            <person name="Lucas S."/>
            <person name="Lapidus A."/>
            <person name="Barry K."/>
            <person name="Detter J.C."/>
            <person name="Glavina del Rio T."/>
            <person name="Hammon N."/>
            <person name="Israni S."/>
            <person name="Dalin E."/>
            <person name="Tice H."/>
            <person name="Pitluck S."/>
            <person name="Munk A.C."/>
            <person name="Brettin T."/>
            <person name="Bruce D."/>
            <person name="Han C."/>
            <person name="Tapia R."/>
            <person name="Gilna P."/>
            <person name="Schmutz J."/>
            <person name="Larimer F."/>
            <person name="Land M."/>
            <person name="Hauser L."/>
            <person name="Kyrpides N."/>
            <person name="Lykidis A."/>
            <person name="Spiro S."/>
            <person name="Richardson D.J."/>
            <person name="Moir J.W.B."/>
            <person name="Ferguson S.J."/>
            <person name="van Spanning R.J.M."/>
            <person name="Richardson P."/>
        </authorList>
    </citation>
    <scope>NUCLEOTIDE SEQUENCE [LARGE SCALE GENOMIC DNA]</scope>
    <source>
        <strain>Pd 1222</strain>
    </source>
</reference>
<evidence type="ECO:0000255" key="1">
    <source>
        <dbReference type="HAMAP-Rule" id="MF_01830"/>
    </source>
</evidence>